<protein>
    <recommendedName>
        <fullName evidence="1">Diaminopimelate epimerase</fullName>
        <shortName evidence="1">DAP epimerase</shortName>
        <ecNumber evidence="1">5.1.1.7</ecNumber>
    </recommendedName>
    <alternativeName>
        <fullName evidence="1">PLP-independent amino acid racemase</fullName>
    </alternativeName>
</protein>
<sequence>MNKFSFTKMHGLGNSYIYVNMFEETIPESLLSSLAVKVSNVNTGIGADGMILICPSEVAPVKMRIFNSDGSEGKNCGNGLRCVAKYAYEHGMVKDRSFFIETLSGLVKAEVTVENGAVTNVTIDMGKPRLKRSEIPMIGLDAERVVAEPFEVDGKQYEITAVSMGNPHVIFYVDDITTAPVTTLGPIVEKDERFPEGVNVEFVEVVNDHELHFRVWERGSGVTQACGTGACAAVVASVLNGKTARNKETVVHLAGGDLIITWTDEGNVRMTGPAETICTGVYYY</sequence>
<organism>
    <name type="scientific">Geobacillus sp. (strain WCH70)</name>
    <dbReference type="NCBI Taxonomy" id="471223"/>
    <lineage>
        <taxon>Bacteria</taxon>
        <taxon>Bacillati</taxon>
        <taxon>Bacillota</taxon>
        <taxon>Bacilli</taxon>
        <taxon>Bacillales</taxon>
        <taxon>Anoxybacillaceae</taxon>
        <taxon>Geobacillus</taxon>
    </lineage>
</organism>
<accession>C5D729</accession>
<gene>
    <name evidence="1" type="primary">dapF</name>
    <name type="ordered locus">GWCH70_2888</name>
</gene>
<evidence type="ECO:0000255" key="1">
    <source>
        <dbReference type="HAMAP-Rule" id="MF_00197"/>
    </source>
</evidence>
<reference key="1">
    <citation type="submission" date="2009-06" db="EMBL/GenBank/DDBJ databases">
        <title>Complete sequence of chromosome of Geopacillus sp. WCH70.</title>
        <authorList>
            <consortium name="US DOE Joint Genome Institute"/>
            <person name="Lucas S."/>
            <person name="Copeland A."/>
            <person name="Lapidus A."/>
            <person name="Glavina del Rio T."/>
            <person name="Dalin E."/>
            <person name="Tice H."/>
            <person name="Bruce D."/>
            <person name="Goodwin L."/>
            <person name="Pitluck S."/>
            <person name="Chertkov O."/>
            <person name="Brettin T."/>
            <person name="Detter J.C."/>
            <person name="Han C."/>
            <person name="Larimer F."/>
            <person name="Land M."/>
            <person name="Hauser L."/>
            <person name="Kyrpides N."/>
            <person name="Mikhailova N."/>
            <person name="Brumm P."/>
            <person name="Mead D.A."/>
            <person name="Richardson P."/>
        </authorList>
    </citation>
    <scope>NUCLEOTIDE SEQUENCE [LARGE SCALE GENOMIC DNA]</scope>
    <source>
        <strain>WCH70</strain>
    </source>
</reference>
<feature type="chain" id="PRO_1000204062" description="Diaminopimelate epimerase">
    <location>
        <begin position="1"/>
        <end position="284"/>
    </location>
</feature>
<feature type="active site" description="Proton donor" evidence="1">
    <location>
        <position position="76"/>
    </location>
</feature>
<feature type="active site" description="Proton acceptor" evidence="1">
    <location>
        <position position="226"/>
    </location>
</feature>
<feature type="binding site" evidence="1">
    <location>
        <position position="14"/>
    </location>
    <ligand>
        <name>substrate</name>
    </ligand>
</feature>
<feature type="binding site" evidence="1">
    <location>
        <position position="67"/>
    </location>
    <ligand>
        <name>substrate</name>
    </ligand>
</feature>
<feature type="binding site" evidence="1">
    <location>
        <begin position="77"/>
        <end position="78"/>
    </location>
    <ligand>
        <name>substrate</name>
    </ligand>
</feature>
<feature type="binding site" evidence="1">
    <location>
        <position position="166"/>
    </location>
    <ligand>
        <name>substrate</name>
    </ligand>
</feature>
<feature type="binding site" evidence="1">
    <location>
        <position position="199"/>
    </location>
    <ligand>
        <name>substrate</name>
    </ligand>
</feature>
<feature type="binding site" evidence="1">
    <location>
        <begin position="217"/>
        <end position="218"/>
    </location>
    <ligand>
        <name>substrate</name>
    </ligand>
</feature>
<feature type="binding site" evidence="1">
    <location>
        <begin position="227"/>
        <end position="228"/>
    </location>
    <ligand>
        <name>substrate</name>
    </ligand>
</feature>
<feature type="site" description="Could be important to modulate the pK values of the two catalytic cysteine residues" evidence="1">
    <location>
        <position position="168"/>
    </location>
</feature>
<feature type="site" description="Could be important to modulate the pK values of the two catalytic cysteine residues" evidence="1">
    <location>
        <position position="217"/>
    </location>
</feature>
<proteinExistence type="inferred from homology"/>
<keyword id="KW-0028">Amino-acid biosynthesis</keyword>
<keyword id="KW-0963">Cytoplasm</keyword>
<keyword id="KW-0413">Isomerase</keyword>
<keyword id="KW-0457">Lysine biosynthesis</keyword>
<name>DAPF_GEOSW</name>
<comment type="function">
    <text evidence="1">Catalyzes the stereoinversion of LL-2,6-diaminopimelate (L,L-DAP) to meso-diaminopimelate (meso-DAP), a precursor of L-lysine and an essential component of the bacterial peptidoglycan.</text>
</comment>
<comment type="catalytic activity">
    <reaction evidence="1">
        <text>(2S,6S)-2,6-diaminopimelate = meso-2,6-diaminopimelate</text>
        <dbReference type="Rhea" id="RHEA:15393"/>
        <dbReference type="ChEBI" id="CHEBI:57609"/>
        <dbReference type="ChEBI" id="CHEBI:57791"/>
        <dbReference type="EC" id="5.1.1.7"/>
    </reaction>
</comment>
<comment type="pathway">
    <text evidence="1">Amino-acid biosynthesis; L-lysine biosynthesis via DAP pathway; DL-2,6-diaminopimelate from LL-2,6-diaminopimelate: step 1/1.</text>
</comment>
<comment type="subunit">
    <text evidence="1">Homodimer.</text>
</comment>
<comment type="subcellular location">
    <subcellularLocation>
        <location evidence="1">Cytoplasm</location>
    </subcellularLocation>
</comment>
<comment type="similarity">
    <text evidence="1">Belongs to the diaminopimelate epimerase family.</text>
</comment>
<dbReference type="EC" id="5.1.1.7" evidence="1"/>
<dbReference type="EMBL" id="CP001638">
    <property type="protein sequence ID" value="ACS25568.1"/>
    <property type="molecule type" value="Genomic_DNA"/>
</dbReference>
<dbReference type="SMR" id="C5D729"/>
<dbReference type="STRING" id="471223.GWCH70_2888"/>
<dbReference type="KEGG" id="gwc:GWCH70_2888"/>
<dbReference type="eggNOG" id="COG0253">
    <property type="taxonomic scope" value="Bacteria"/>
</dbReference>
<dbReference type="HOGENOM" id="CLU_053306_3_0_9"/>
<dbReference type="OrthoDB" id="9805408at2"/>
<dbReference type="UniPathway" id="UPA00034">
    <property type="reaction ID" value="UER00025"/>
</dbReference>
<dbReference type="GO" id="GO:0005829">
    <property type="term" value="C:cytosol"/>
    <property type="evidence" value="ECO:0007669"/>
    <property type="project" value="TreeGrafter"/>
</dbReference>
<dbReference type="GO" id="GO:0008837">
    <property type="term" value="F:diaminopimelate epimerase activity"/>
    <property type="evidence" value="ECO:0007669"/>
    <property type="project" value="UniProtKB-UniRule"/>
</dbReference>
<dbReference type="GO" id="GO:0009089">
    <property type="term" value="P:lysine biosynthetic process via diaminopimelate"/>
    <property type="evidence" value="ECO:0007669"/>
    <property type="project" value="UniProtKB-UniRule"/>
</dbReference>
<dbReference type="FunFam" id="3.10.310.10:FF:000004">
    <property type="entry name" value="Diaminopimelate epimerase"/>
    <property type="match status" value="1"/>
</dbReference>
<dbReference type="FunFam" id="3.10.310.10:FF:000006">
    <property type="entry name" value="Diaminopimelate epimerase"/>
    <property type="match status" value="1"/>
</dbReference>
<dbReference type="Gene3D" id="3.10.310.10">
    <property type="entry name" value="Diaminopimelate Epimerase, Chain A, domain 1"/>
    <property type="match status" value="2"/>
</dbReference>
<dbReference type="HAMAP" id="MF_00197">
    <property type="entry name" value="DAP_epimerase"/>
    <property type="match status" value="1"/>
</dbReference>
<dbReference type="InterPro" id="IPR018510">
    <property type="entry name" value="DAP_epimerase_AS"/>
</dbReference>
<dbReference type="InterPro" id="IPR001653">
    <property type="entry name" value="DAP_epimerase_DapF"/>
</dbReference>
<dbReference type="NCBIfam" id="TIGR00652">
    <property type="entry name" value="DapF"/>
    <property type="match status" value="1"/>
</dbReference>
<dbReference type="PANTHER" id="PTHR31689:SF0">
    <property type="entry name" value="DIAMINOPIMELATE EPIMERASE"/>
    <property type="match status" value="1"/>
</dbReference>
<dbReference type="PANTHER" id="PTHR31689">
    <property type="entry name" value="DIAMINOPIMELATE EPIMERASE, CHLOROPLASTIC"/>
    <property type="match status" value="1"/>
</dbReference>
<dbReference type="Pfam" id="PF01678">
    <property type="entry name" value="DAP_epimerase"/>
    <property type="match status" value="2"/>
</dbReference>
<dbReference type="SUPFAM" id="SSF54506">
    <property type="entry name" value="Diaminopimelate epimerase-like"/>
    <property type="match status" value="1"/>
</dbReference>
<dbReference type="PROSITE" id="PS01326">
    <property type="entry name" value="DAP_EPIMERASE"/>
    <property type="match status" value="1"/>
</dbReference>